<protein>
    <recommendedName>
        <fullName evidence="1">UPF0342 protein SE_1526</fullName>
    </recommendedName>
</protein>
<accession>Q8CRY0</accession>
<proteinExistence type="inferred from homology"/>
<reference key="1">
    <citation type="journal article" date="2003" name="Mol. Microbiol.">
        <title>Genome-based analysis of virulence genes in a non-biofilm-forming Staphylococcus epidermidis strain (ATCC 12228).</title>
        <authorList>
            <person name="Zhang Y.-Q."/>
            <person name="Ren S.-X."/>
            <person name="Li H.-L."/>
            <person name="Wang Y.-X."/>
            <person name="Fu G."/>
            <person name="Yang J."/>
            <person name="Qin Z.-Q."/>
            <person name="Miao Y.-G."/>
            <person name="Wang W.-Y."/>
            <person name="Chen R.-S."/>
            <person name="Shen Y."/>
            <person name="Chen Z."/>
            <person name="Yuan Z.-H."/>
            <person name="Zhao G.-P."/>
            <person name="Qu D."/>
            <person name="Danchin A."/>
            <person name="Wen Y.-M."/>
        </authorList>
    </citation>
    <scope>NUCLEOTIDE SEQUENCE [LARGE SCALE GENOMIC DNA]</scope>
    <source>
        <strain>ATCC 12228 / FDA PCI 1200</strain>
    </source>
</reference>
<comment type="similarity">
    <text evidence="1">Belongs to the UPF0342 family.</text>
</comment>
<name>Y1526_STAES</name>
<evidence type="ECO:0000255" key="1">
    <source>
        <dbReference type="HAMAP-Rule" id="MF_01526"/>
    </source>
</evidence>
<organism>
    <name type="scientific">Staphylococcus epidermidis (strain ATCC 12228 / FDA PCI 1200)</name>
    <dbReference type="NCBI Taxonomy" id="176280"/>
    <lineage>
        <taxon>Bacteria</taxon>
        <taxon>Bacillati</taxon>
        <taxon>Bacillota</taxon>
        <taxon>Bacilli</taxon>
        <taxon>Bacillales</taxon>
        <taxon>Staphylococcaceae</taxon>
        <taxon>Staphylococcus</taxon>
    </lineage>
</organism>
<dbReference type="EMBL" id="AE015929">
    <property type="protein sequence ID" value="AAO05125.1"/>
    <property type="molecule type" value="Genomic_DNA"/>
</dbReference>
<dbReference type="RefSeq" id="NP_765081.1">
    <property type="nucleotide sequence ID" value="NC_004461.1"/>
</dbReference>
<dbReference type="RefSeq" id="WP_002485196.1">
    <property type="nucleotide sequence ID" value="NC_004461.1"/>
</dbReference>
<dbReference type="SMR" id="Q8CRY0"/>
<dbReference type="KEGG" id="sep:SE_1526"/>
<dbReference type="PATRIC" id="fig|176280.10.peg.1491"/>
<dbReference type="eggNOG" id="COG3679">
    <property type="taxonomic scope" value="Bacteria"/>
</dbReference>
<dbReference type="HOGENOM" id="CLU_140243_3_0_9"/>
<dbReference type="OrthoDB" id="9811402at2"/>
<dbReference type="Proteomes" id="UP000001411">
    <property type="component" value="Chromosome"/>
</dbReference>
<dbReference type="Gene3D" id="1.20.1500.10">
    <property type="entry name" value="YheA/YmcA-like"/>
    <property type="match status" value="1"/>
</dbReference>
<dbReference type="HAMAP" id="MF_01526">
    <property type="entry name" value="UPF0342"/>
    <property type="match status" value="1"/>
</dbReference>
<dbReference type="InterPro" id="IPR010368">
    <property type="entry name" value="Com_YlbF"/>
</dbReference>
<dbReference type="InterPro" id="IPR023378">
    <property type="entry name" value="YheA/YmcA-like_dom_sf"/>
</dbReference>
<dbReference type="NCBIfam" id="NF010212">
    <property type="entry name" value="PRK13676.1-5"/>
    <property type="match status" value="1"/>
</dbReference>
<dbReference type="Pfam" id="PF06133">
    <property type="entry name" value="Com_YlbF"/>
    <property type="match status" value="1"/>
</dbReference>
<dbReference type="SUPFAM" id="SSF158622">
    <property type="entry name" value="YheA/YmcA-like"/>
    <property type="match status" value="1"/>
</dbReference>
<gene>
    <name type="ordered locus">SE_1526</name>
</gene>
<sequence length="114" mass="13442">MAVNLYDYANQLEQALRDSDEYKAIKDAFAKVKENEESKKLFDEFRETQMNFQQKQMQGEEIPEEDLQKAQEQAQAIEKDENISELMNAEQKMSQVFQEINQIIVKPLDEIYAD</sequence>
<feature type="chain" id="PRO_0000109989" description="UPF0342 protein SE_1526">
    <location>
        <begin position="1"/>
        <end position="114"/>
    </location>
</feature>